<evidence type="ECO:0000255" key="1">
    <source>
        <dbReference type="HAMAP-Rule" id="MF_01561"/>
    </source>
</evidence>
<sequence>MQYQVDTHTHTVASSHAYSTIHDYIAVAKQKGIRLFANTDHGPAMADAPHFWHFVNLRVLPRMVDGVGILRGIEANIKNIDGEIDFFGDYLKQLDIVLAGFHEPVYPPSDKATHTEAMINTIKSGKVDIITHPGNPAYPIDIEAVARAAAEYGVALEINNSSFEVSRKGSEANCTAIAKAAKEFGTILVMGSDSHVAFSLGGFARAQAIIDEVAYPPSRLLNRSPSALLTFLAARGHETVADLIPLFSDDEPCC</sequence>
<name>Y1467_SHEB8</name>
<dbReference type="EC" id="3.1.3.-" evidence="1"/>
<dbReference type="EMBL" id="CP000753">
    <property type="protein sequence ID" value="ABS07617.1"/>
    <property type="molecule type" value="Genomic_DNA"/>
</dbReference>
<dbReference type="RefSeq" id="WP_012088737.1">
    <property type="nucleotide sequence ID" value="NC_009665.1"/>
</dbReference>
<dbReference type="SMR" id="A6WLC8"/>
<dbReference type="KEGG" id="sbm:Shew185_1467"/>
<dbReference type="HOGENOM" id="CLU_061999_0_1_6"/>
<dbReference type="GO" id="GO:0005829">
    <property type="term" value="C:cytosol"/>
    <property type="evidence" value="ECO:0007669"/>
    <property type="project" value="TreeGrafter"/>
</dbReference>
<dbReference type="GO" id="GO:0016791">
    <property type="term" value="F:phosphatase activity"/>
    <property type="evidence" value="ECO:0007669"/>
    <property type="project" value="UniProtKB-UniRule"/>
</dbReference>
<dbReference type="GO" id="GO:0008270">
    <property type="term" value="F:zinc ion binding"/>
    <property type="evidence" value="ECO:0007669"/>
    <property type="project" value="UniProtKB-UniRule"/>
</dbReference>
<dbReference type="GO" id="GO:0071978">
    <property type="term" value="P:bacterial-type flagellum-dependent swarming motility"/>
    <property type="evidence" value="ECO:0007669"/>
    <property type="project" value="TreeGrafter"/>
</dbReference>
<dbReference type="CDD" id="cd07437">
    <property type="entry name" value="PHP_HisPPase_Ycdx_like"/>
    <property type="match status" value="1"/>
</dbReference>
<dbReference type="FunFam" id="3.20.20.140:FF:000008">
    <property type="entry name" value="Probable phosphatase YcdX"/>
    <property type="match status" value="1"/>
</dbReference>
<dbReference type="Gene3D" id="3.20.20.140">
    <property type="entry name" value="Metal-dependent hydrolases"/>
    <property type="match status" value="1"/>
</dbReference>
<dbReference type="HAMAP" id="MF_01561">
    <property type="entry name" value="YcdX_phosphat"/>
    <property type="match status" value="1"/>
</dbReference>
<dbReference type="InterPro" id="IPR023710">
    <property type="entry name" value="Phosphatase_YcdX_put"/>
</dbReference>
<dbReference type="InterPro" id="IPR004013">
    <property type="entry name" value="PHP_dom"/>
</dbReference>
<dbReference type="InterPro" id="IPR050243">
    <property type="entry name" value="PHP_phosphatase"/>
</dbReference>
<dbReference type="InterPro" id="IPR003141">
    <property type="entry name" value="Pol/His_phosphatase_N"/>
</dbReference>
<dbReference type="InterPro" id="IPR016195">
    <property type="entry name" value="Pol/histidinol_Pase-like"/>
</dbReference>
<dbReference type="NCBIfam" id="NF006702">
    <property type="entry name" value="PRK09248.1"/>
    <property type="match status" value="1"/>
</dbReference>
<dbReference type="PANTHER" id="PTHR36928">
    <property type="entry name" value="PHOSPHATASE YCDX-RELATED"/>
    <property type="match status" value="1"/>
</dbReference>
<dbReference type="PANTHER" id="PTHR36928:SF1">
    <property type="entry name" value="PHOSPHATASE YCDX-RELATED"/>
    <property type="match status" value="1"/>
</dbReference>
<dbReference type="Pfam" id="PF02811">
    <property type="entry name" value="PHP"/>
    <property type="match status" value="1"/>
</dbReference>
<dbReference type="SMART" id="SM00481">
    <property type="entry name" value="POLIIIAc"/>
    <property type="match status" value="1"/>
</dbReference>
<dbReference type="SUPFAM" id="SSF89550">
    <property type="entry name" value="PHP domain-like"/>
    <property type="match status" value="1"/>
</dbReference>
<organism>
    <name type="scientific">Shewanella baltica (strain OS185)</name>
    <dbReference type="NCBI Taxonomy" id="402882"/>
    <lineage>
        <taxon>Bacteria</taxon>
        <taxon>Pseudomonadati</taxon>
        <taxon>Pseudomonadota</taxon>
        <taxon>Gammaproteobacteria</taxon>
        <taxon>Alteromonadales</taxon>
        <taxon>Shewanellaceae</taxon>
        <taxon>Shewanella</taxon>
    </lineage>
</organism>
<keyword id="KW-0378">Hydrolase</keyword>
<keyword id="KW-0479">Metal-binding</keyword>
<keyword id="KW-0862">Zinc</keyword>
<protein>
    <recommendedName>
        <fullName evidence="1">Probable phosphatase Shew185_1467</fullName>
        <ecNumber evidence="1">3.1.3.-</ecNumber>
    </recommendedName>
</protein>
<feature type="chain" id="PRO_1000069026" description="Probable phosphatase Shew185_1467">
    <location>
        <begin position="1"/>
        <end position="254"/>
    </location>
</feature>
<feature type="binding site" evidence="1">
    <location>
        <position position="8"/>
    </location>
    <ligand>
        <name>Zn(2+)</name>
        <dbReference type="ChEBI" id="CHEBI:29105"/>
        <label>1</label>
    </ligand>
</feature>
<feature type="binding site" evidence="1">
    <location>
        <position position="10"/>
    </location>
    <ligand>
        <name>Zn(2+)</name>
        <dbReference type="ChEBI" id="CHEBI:29105"/>
        <label>1</label>
    </ligand>
</feature>
<feature type="binding site" evidence="1">
    <location>
        <position position="16"/>
    </location>
    <ligand>
        <name>Zn(2+)</name>
        <dbReference type="ChEBI" id="CHEBI:29105"/>
        <label>2</label>
    </ligand>
</feature>
<feature type="binding site" evidence="1">
    <location>
        <position position="41"/>
    </location>
    <ligand>
        <name>Zn(2+)</name>
        <dbReference type="ChEBI" id="CHEBI:29105"/>
        <label>2</label>
    </ligand>
</feature>
<feature type="binding site" evidence="1">
    <location>
        <position position="74"/>
    </location>
    <ligand>
        <name>Zn(2+)</name>
        <dbReference type="ChEBI" id="CHEBI:29105"/>
        <label>1</label>
    </ligand>
</feature>
<feature type="binding site" evidence="1">
    <location>
        <position position="74"/>
    </location>
    <ligand>
        <name>Zn(2+)</name>
        <dbReference type="ChEBI" id="CHEBI:29105"/>
        <label>3</label>
    </ligand>
</feature>
<feature type="binding site" evidence="1">
    <location>
        <position position="102"/>
    </location>
    <ligand>
        <name>Zn(2+)</name>
        <dbReference type="ChEBI" id="CHEBI:29105"/>
        <label>3</label>
    </ligand>
</feature>
<feature type="binding site" evidence="1">
    <location>
        <position position="132"/>
    </location>
    <ligand>
        <name>Zn(2+)</name>
        <dbReference type="ChEBI" id="CHEBI:29105"/>
        <label>3</label>
    </ligand>
</feature>
<feature type="binding site" evidence="1">
    <location>
        <position position="193"/>
    </location>
    <ligand>
        <name>Zn(2+)</name>
        <dbReference type="ChEBI" id="CHEBI:29105"/>
        <label>1</label>
    </ligand>
</feature>
<feature type="binding site" evidence="1">
    <location>
        <position position="195"/>
    </location>
    <ligand>
        <name>Zn(2+)</name>
        <dbReference type="ChEBI" id="CHEBI:29105"/>
        <label>2</label>
    </ligand>
</feature>
<proteinExistence type="inferred from homology"/>
<comment type="cofactor">
    <cofactor evidence="1">
        <name>Zn(2+)</name>
        <dbReference type="ChEBI" id="CHEBI:29105"/>
    </cofactor>
    <text evidence="1">Binds 3 Zn(2+) ions per subunit.</text>
</comment>
<comment type="similarity">
    <text evidence="1">Belongs to the PHP family.</text>
</comment>
<accession>A6WLC8</accession>
<gene>
    <name type="ordered locus">Shew185_1467</name>
</gene>
<reference key="1">
    <citation type="submission" date="2007-07" db="EMBL/GenBank/DDBJ databases">
        <title>Complete sequence of chromosome of Shewanella baltica OS185.</title>
        <authorList>
            <consortium name="US DOE Joint Genome Institute"/>
            <person name="Copeland A."/>
            <person name="Lucas S."/>
            <person name="Lapidus A."/>
            <person name="Barry K."/>
            <person name="Glavina del Rio T."/>
            <person name="Dalin E."/>
            <person name="Tice H."/>
            <person name="Pitluck S."/>
            <person name="Sims D."/>
            <person name="Brettin T."/>
            <person name="Bruce D."/>
            <person name="Detter J.C."/>
            <person name="Han C."/>
            <person name="Schmutz J."/>
            <person name="Larimer F."/>
            <person name="Land M."/>
            <person name="Hauser L."/>
            <person name="Kyrpides N."/>
            <person name="Mikhailova N."/>
            <person name="Brettar I."/>
            <person name="Rodrigues J."/>
            <person name="Konstantinidis K."/>
            <person name="Tiedje J."/>
            <person name="Richardson P."/>
        </authorList>
    </citation>
    <scope>NUCLEOTIDE SEQUENCE [LARGE SCALE GENOMIC DNA]</scope>
    <source>
        <strain>OS185</strain>
    </source>
</reference>